<organism>
    <name type="scientific">Mycobacterium sp. (strain JLS)</name>
    <dbReference type="NCBI Taxonomy" id="164757"/>
    <lineage>
        <taxon>Bacteria</taxon>
        <taxon>Bacillati</taxon>
        <taxon>Actinomycetota</taxon>
        <taxon>Actinomycetes</taxon>
        <taxon>Mycobacteriales</taxon>
        <taxon>Mycobacteriaceae</taxon>
        <taxon>Mycobacterium</taxon>
    </lineage>
</organism>
<keyword id="KW-0240">DNA-directed RNA polymerase</keyword>
<keyword id="KW-0548">Nucleotidyltransferase</keyword>
<keyword id="KW-0804">Transcription</keyword>
<keyword id="KW-0808">Transferase</keyword>
<dbReference type="EC" id="2.7.7.6" evidence="1"/>
<dbReference type="EMBL" id="CP000580">
    <property type="protein sequence ID" value="ABN96805.1"/>
    <property type="molecule type" value="Genomic_DNA"/>
</dbReference>
<dbReference type="SMR" id="A3PV78"/>
<dbReference type="KEGG" id="mjl:Mjls_0997"/>
<dbReference type="HOGENOM" id="CLU_000524_4_3_11"/>
<dbReference type="BioCyc" id="MSP164757:G1G8C-1009-MONOMER"/>
<dbReference type="GO" id="GO:0000428">
    <property type="term" value="C:DNA-directed RNA polymerase complex"/>
    <property type="evidence" value="ECO:0007669"/>
    <property type="project" value="UniProtKB-KW"/>
</dbReference>
<dbReference type="GO" id="GO:0003677">
    <property type="term" value="F:DNA binding"/>
    <property type="evidence" value="ECO:0007669"/>
    <property type="project" value="UniProtKB-UniRule"/>
</dbReference>
<dbReference type="GO" id="GO:0003899">
    <property type="term" value="F:DNA-directed RNA polymerase activity"/>
    <property type="evidence" value="ECO:0007669"/>
    <property type="project" value="UniProtKB-UniRule"/>
</dbReference>
<dbReference type="GO" id="GO:0032549">
    <property type="term" value="F:ribonucleoside binding"/>
    <property type="evidence" value="ECO:0007669"/>
    <property type="project" value="InterPro"/>
</dbReference>
<dbReference type="GO" id="GO:0006351">
    <property type="term" value="P:DNA-templated transcription"/>
    <property type="evidence" value="ECO:0007669"/>
    <property type="project" value="UniProtKB-UniRule"/>
</dbReference>
<dbReference type="CDD" id="cd00653">
    <property type="entry name" value="RNA_pol_B_RPB2"/>
    <property type="match status" value="1"/>
</dbReference>
<dbReference type="FunFam" id="2.40.50.150:FF:000001">
    <property type="entry name" value="DNA-directed RNA polymerase subunit beta"/>
    <property type="match status" value="1"/>
</dbReference>
<dbReference type="FunFam" id="3.90.1800.10:FF:000005">
    <property type="entry name" value="DNA-directed RNA polymerase subunit beta"/>
    <property type="match status" value="1"/>
</dbReference>
<dbReference type="Gene3D" id="2.40.50.100">
    <property type="match status" value="1"/>
</dbReference>
<dbReference type="Gene3D" id="2.40.50.150">
    <property type="match status" value="1"/>
</dbReference>
<dbReference type="Gene3D" id="3.90.1100.10">
    <property type="match status" value="1"/>
</dbReference>
<dbReference type="Gene3D" id="2.30.150.10">
    <property type="entry name" value="DNA-directed RNA polymerase, beta subunit, external 1 domain"/>
    <property type="match status" value="1"/>
</dbReference>
<dbReference type="Gene3D" id="2.40.270.10">
    <property type="entry name" value="DNA-directed RNA polymerase, subunit 2, domain 6"/>
    <property type="match status" value="1"/>
</dbReference>
<dbReference type="Gene3D" id="3.90.1800.10">
    <property type="entry name" value="RNA polymerase alpha subunit dimerisation domain"/>
    <property type="match status" value="1"/>
</dbReference>
<dbReference type="Gene3D" id="3.90.1110.10">
    <property type="entry name" value="RNA polymerase Rpb2, domain 2"/>
    <property type="match status" value="1"/>
</dbReference>
<dbReference type="HAMAP" id="MF_01321">
    <property type="entry name" value="RNApol_bact_RpoB"/>
    <property type="match status" value="1"/>
</dbReference>
<dbReference type="InterPro" id="IPR042107">
    <property type="entry name" value="DNA-dir_RNA_pol_bsu_ext_1_sf"/>
</dbReference>
<dbReference type="InterPro" id="IPR019462">
    <property type="entry name" value="DNA-dir_RNA_pol_bsu_external_1"/>
</dbReference>
<dbReference type="InterPro" id="IPR015712">
    <property type="entry name" value="DNA-dir_RNA_pol_su2"/>
</dbReference>
<dbReference type="InterPro" id="IPR007120">
    <property type="entry name" value="DNA-dir_RNAP_su2_dom"/>
</dbReference>
<dbReference type="InterPro" id="IPR037033">
    <property type="entry name" value="DNA-dir_RNAP_su2_hyb_sf"/>
</dbReference>
<dbReference type="InterPro" id="IPR010243">
    <property type="entry name" value="RNA_pol_bsu_bac"/>
</dbReference>
<dbReference type="InterPro" id="IPR007121">
    <property type="entry name" value="RNA_pol_bsu_CS"/>
</dbReference>
<dbReference type="InterPro" id="IPR007644">
    <property type="entry name" value="RNA_pol_bsu_protrusion"/>
</dbReference>
<dbReference type="InterPro" id="IPR007642">
    <property type="entry name" value="RNA_pol_Rpb2_2"/>
</dbReference>
<dbReference type="InterPro" id="IPR037034">
    <property type="entry name" value="RNA_pol_Rpb2_2_sf"/>
</dbReference>
<dbReference type="InterPro" id="IPR007645">
    <property type="entry name" value="RNA_pol_Rpb2_3"/>
</dbReference>
<dbReference type="InterPro" id="IPR007641">
    <property type="entry name" value="RNA_pol_Rpb2_7"/>
</dbReference>
<dbReference type="InterPro" id="IPR014724">
    <property type="entry name" value="RNA_pol_RPB2_OB-fold"/>
</dbReference>
<dbReference type="NCBIfam" id="NF001616">
    <property type="entry name" value="PRK00405.1"/>
    <property type="match status" value="1"/>
</dbReference>
<dbReference type="NCBIfam" id="TIGR02013">
    <property type="entry name" value="rpoB"/>
    <property type="match status" value="1"/>
</dbReference>
<dbReference type="PANTHER" id="PTHR20856">
    <property type="entry name" value="DNA-DIRECTED RNA POLYMERASE I SUBUNIT 2"/>
    <property type="match status" value="1"/>
</dbReference>
<dbReference type="Pfam" id="PF04563">
    <property type="entry name" value="RNA_pol_Rpb2_1"/>
    <property type="match status" value="1"/>
</dbReference>
<dbReference type="Pfam" id="PF04561">
    <property type="entry name" value="RNA_pol_Rpb2_2"/>
    <property type="match status" value="1"/>
</dbReference>
<dbReference type="Pfam" id="PF04565">
    <property type="entry name" value="RNA_pol_Rpb2_3"/>
    <property type="match status" value="1"/>
</dbReference>
<dbReference type="Pfam" id="PF10385">
    <property type="entry name" value="RNA_pol_Rpb2_45"/>
    <property type="match status" value="1"/>
</dbReference>
<dbReference type="Pfam" id="PF00562">
    <property type="entry name" value="RNA_pol_Rpb2_6"/>
    <property type="match status" value="1"/>
</dbReference>
<dbReference type="Pfam" id="PF04560">
    <property type="entry name" value="RNA_pol_Rpb2_7"/>
    <property type="match status" value="1"/>
</dbReference>
<dbReference type="SUPFAM" id="SSF64484">
    <property type="entry name" value="beta and beta-prime subunits of DNA dependent RNA-polymerase"/>
    <property type="match status" value="1"/>
</dbReference>
<dbReference type="PROSITE" id="PS01166">
    <property type="entry name" value="RNA_POL_BETA"/>
    <property type="match status" value="1"/>
</dbReference>
<sequence length="1172" mass="129079">MLEGCILAVSSQSKSAKAITNNSVPGAPNRISFAKLREPLEVPGLLDVQTESFDWLIGADSWRQRATARGDVNPTGGLEEVLTELSPIEDFSGSMSLSFSDPRFDEVKAPVDECKDKDMTYAAPLFVTAEFINNNTGEIKSQTVFMGDFPMMTEKGTFIINGTERVVVSQLVRSPGVYFDESIDKSTEKTLHSVKVIPGRGAWLEFDVDKRDTVGVRIDRKRRQPVTVLLKALGWTNEQITERFGFSEIMMSTLEKDNTAGTDEALLDIYRKLRPGEPPTKESAQTLLENLFFKEKRYDLARVGRYKVNKKLGLNTDKPITSSTLTEEDVVATIEYLVRLHEGQATMTVPGGVEVPVEVDDIDHFGNRRLRTVGELIQNQIRVGLSRMERVVRERMTTQDVEAITPQTLINIRPVVAAIKEFFGTSQLSQFMDQNNPLSGLTHKRRLSALGPGGLSRERAGLEVRDVHSSHYGRMCPIETPEGPNIGLIGSLSVYARVNPFGFIETPYRKVENGVVTDQIDYLTADEEDRHVVAQANSPLDDEGHFTEDRVLVRRKGGEVEFVSATEVDYMDVSPRQMVSVATAMIPFLEHDDANRALMGANMQRQAVPLVRSEAPLVGTGMELRAAIDAGDVVVSEKAGVVEEVSADYITVMADDGTRHTYRMRKFARSNHGTCANQRPIVDAGQRVEAGQVVADGPCTQNGEMALGKNLLVAIMPWEGHNYEDAIILSNRLVEEDVLTSIHIEEHEIDARDTKLGAEEITRDIPNVSDEVLADLDERGIVRIGAEVRDGDILVGKVTPKGETELTPEERLLRAIFGEKAREVRDTSLKVPHGESGKVIGIRVFSREDDDELPAGVNELVRVYVAQKRKISDGDKLAGRHGNKGVIGKILPVEDMPFLPDGTPVDIILNTHGVPRRMNIGQILETHLGWVAKAGWNINVAGADGVPDWAEKLPEELYSAPSDSIVATPVFDGARENELSGLLASTLPNRDGDVMVNEDGKAELFDGRSGEPFPYPVTVGYMYILKLHHLVDDKIHARSTGPYSMITQQPLGGKAQFGGQRFGEMECWAMQAYGAAYTLQELLTIKSDDTVGRVKVYEAIVKGENIPEPGIPESFKVLLKELQSLCLNVEVLSSDGAAIEMRDGDDEDLERAAANLGINLSRNESASVEDLA</sequence>
<feature type="chain" id="PRO_0000300350" description="DNA-directed RNA polymerase subunit beta">
    <location>
        <begin position="1"/>
        <end position="1172"/>
    </location>
</feature>
<accession>A3PV78</accession>
<name>RPOB_MYCSJ</name>
<comment type="function">
    <text evidence="1">DNA-dependent RNA polymerase catalyzes the transcription of DNA into RNA using the four ribonucleoside triphosphates as substrates.</text>
</comment>
<comment type="catalytic activity">
    <reaction evidence="1">
        <text>RNA(n) + a ribonucleoside 5'-triphosphate = RNA(n+1) + diphosphate</text>
        <dbReference type="Rhea" id="RHEA:21248"/>
        <dbReference type="Rhea" id="RHEA-COMP:14527"/>
        <dbReference type="Rhea" id="RHEA-COMP:17342"/>
        <dbReference type="ChEBI" id="CHEBI:33019"/>
        <dbReference type="ChEBI" id="CHEBI:61557"/>
        <dbReference type="ChEBI" id="CHEBI:140395"/>
        <dbReference type="EC" id="2.7.7.6"/>
    </reaction>
</comment>
<comment type="subunit">
    <text evidence="1">The RNAP catalytic core consists of 2 alpha, 1 beta, 1 beta' and 1 omega subunit. When a sigma factor is associated with the core the holoenzyme is formed, which can initiate transcription.</text>
</comment>
<comment type="similarity">
    <text evidence="1">Belongs to the RNA polymerase beta chain family.</text>
</comment>
<reference key="1">
    <citation type="submission" date="2007-02" db="EMBL/GenBank/DDBJ databases">
        <title>Complete sequence of Mycobacterium sp. JLS.</title>
        <authorList>
            <consortium name="US DOE Joint Genome Institute"/>
            <person name="Copeland A."/>
            <person name="Lucas S."/>
            <person name="Lapidus A."/>
            <person name="Barry K."/>
            <person name="Detter J.C."/>
            <person name="Glavina del Rio T."/>
            <person name="Hammon N."/>
            <person name="Israni S."/>
            <person name="Dalin E."/>
            <person name="Tice H."/>
            <person name="Pitluck S."/>
            <person name="Chain P."/>
            <person name="Malfatti S."/>
            <person name="Shin M."/>
            <person name="Vergez L."/>
            <person name="Schmutz J."/>
            <person name="Larimer F."/>
            <person name="Land M."/>
            <person name="Hauser L."/>
            <person name="Kyrpides N."/>
            <person name="Mikhailova N."/>
            <person name="Miller C.D."/>
            <person name="Anderson A.J."/>
            <person name="Sims R.C."/>
            <person name="Richardson P."/>
        </authorList>
    </citation>
    <scope>NUCLEOTIDE SEQUENCE [LARGE SCALE GENOMIC DNA]</scope>
    <source>
        <strain>JLS</strain>
    </source>
</reference>
<protein>
    <recommendedName>
        <fullName evidence="1">DNA-directed RNA polymerase subunit beta</fullName>
        <shortName evidence="1">RNAP subunit beta</shortName>
        <ecNumber evidence="1">2.7.7.6</ecNumber>
    </recommendedName>
    <alternativeName>
        <fullName evidence="1">RNA polymerase subunit beta</fullName>
    </alternativeName>
    <alternativeName>
        <fullName evidence="1">Transcriptase subunit beta</fullName>
    </alternativeName>
</protein>
<gene>
    <name evidence="1" type="primary">rpoB</name>
    <name type="ordered locus">Mjls_0997</name>
</gene>
<proteinExistence type="inferred from homology"/>
<evidence type="ECO:0000255" key="1">
    <source>
        <dbReference type="HAMAP-Rule" id="MF_01321"/>
    </source>
</evidence>